<accession>Q7MQD7</accession>
<evidence type="ECO:0000255" key="1">
    <source>
        <dbReference type="HAMAP-Rule" id="MF_01523"/>
    </source>
</evidence>
<dbReference type="EC" id="2.1.1.242" evidence="1"/>
<dbReference type="EMBL" id="BA000037">
    <property type="protein sequence ID" value="BAC92835.1"/>
    <property type="molecule type" value="Genomic_DNA"/>
</dbReference>
<dbReference type="RefSeq" id="WP_011149097.1">
    <property type="nucleotide sequence ID" value="NC_005139.1"/>
</dbReference>
<dbReference type="SMR" id="Q7MQD7"/>
<dbReference type="STRING" id="672.VV93_v1c00630"/>
<dbReference type="KEGG" id="vvy:VV0071"/>
<dbReference type="PATRIC" id="fig|196600.6.peg.120"/>
<dbReference type="eggNOG" id="COG0742">
    <property type="taxonomic scope" value="Bacteria"/>
</dbReference>
<dbReference type="HOGENOM" id="CLU_076324_0_0_6"/>
<dbReference type="Proteomes" id="UP000002675">
    <property type="component" value="Chromosome I"/>
</dbReference>
<dbReference type="GO" id="GO:0005737">
    <property type="term" value="C:cytoplasm"/>
    <property type="evidence" value="ECO:0007669"/>
    <property type="project" value="UniProtKB-SubCell"/>
</dbReference>
<dbReference type="GO" id="GO:0008990">
    <property type="term" value="F:rRNA (guanine-N2-)-methyltransferase activity"/>
    <property type="evidence" value="ECO:0007669"/>
    <property type="project" value="UniProtKB-UniRule"/>
</dbReference>
<dbReference type="Gene3D" id="3.40.50.150">
    <property type="entry name" value="Vaccinia Virus protein VP39"/>
    <property type="match status" value="1"/>
</dbReference>
<dbReference type="Gene3D" id="3.40.1630.10">
    <property type="entry name" value="YhiQ-like domain"/>
    <property type="match status" value="1"/>
</dbReference>
<dbReference type="HAMAP" id="MF_01523">
    <property type="entry name" value="16SrRNA_methyltr_J"/>
    <property type="match status" value="1"/>
</dbReference>
<dbReference type="InterPro" id="IPR007536">
    <property type="entry name" value="16SrRNA_methylTrfase_J"/>
</dbReference>
<dbReference type="InterPro" id="IPR029063">
    <property type="entry name" value="SAM-dependent_MTases_sf"/>
</dbReference>
<dbReference type="PANTHER" id="PTHR36112">
    <property type="entry name" value="RIBOSOMAL RNA SMALL SUBUNIT METHYLTRANSFERASE J"/>
    <property type="match status" value="1"/>
</dbReference>
<dbReference type="PANTHER" id="PTHR36112:SF1">
    <property type="entry name" value="RIBOSOMAL RNA SMALL SUBUNIT METHYLTRANSFERASE J"/>
    <property type="match status" value="1"/>
</dbReference>
<dbReference type="Pfam" id="PF04445">
    <property type="entry name" value="SAM_MT"/>
    <property type="match status" value="1"/>
</dbReference>
<dbReference type="SUPFAM" id="SSF53335">
    <property type="entry name" value="S-adenosyl-L-methionine-dependent methyltransferases"/>
    <property type="match status" value="1"/>
</dbReference>
<keyword id="KW-0963">Cytoplasm</keyword>
<keyword id="KW-0489">Methyltransferase</keyword>
<keyword id="KW-0698">rRNA processing</keyword>
<keyword id="KW-0949">S-adenosyl-L-methionine</keyword>
<keyword id="KW-0808">Transferase</keyword>
<name>RSMJ_VIBVY</name>
<organism>
    <name type="scientific">Vibrio vulnificus (strain YJ016)</name>
    <dbReference type="NCBI Taxonomy" id="196600"/>
    <lineage>
        <taxon>Bacteria</taxon>
        <taxon>Pseudomonadati</taxon>
        <taxon>Pseudomonadota</taxon>
        <taxon>Gammaproteobacteria</taxon>
        <taxon>Vibrionales</taxon>
        <taxon>Vibrionaceae</taxon>
        <taxon>Vibrio</taxon>
    </lineage>
</organism>
<feature type="chain" id="PRO_0000212098" description="Ribosomal RNA small subunit methyltransferase J">
    <location>
        <begin position="1"/>
        <end position="259"/>
    </location>
</feature>
<feature type="binding site" evidence="1">
    <location>
        <begin position="101"/>
        <end position="102"/>
    </location>
    <ligand>
        <name>S-adenosyl-L-methionine</name>
        <dbReference type="ChEBI" id="CHEBI:59789"/>
    </ligand>
</feature>
<feature type="binding site" evidence="1">
    <location>
        <begin position="117"/>
        <end position="118"/>
    </location>
    <ligand>
        <name>S-adenosyl-L-methionine</name>
        <dbReference type="ChEBI" id="CHEBI:59789"/>
    </ligand>
</feature>
<feature type="binding site" evidence="1">
    <location>
        <begin position="153"/>
        <end position="154"/>
    </location>
    <ligand>
        <name>S-adenosyl-L-methionine</name>
        <dbReference type="ChEBI" id="CHEBI:59789"/>
    </ligand>
</feature>
<feature type="binding site" evidence="1">
    <location>
        <position position="176"/>
    </location>
    <ligand>
        <name>S-adenosyl-L-methionine</name>
        <dbReference type="ChEBI" id="CHEBI:59789"/>
    </ligand>
</feature>
<sequence>MQLQLICEDAALQPYLDAIASKWQLTHDAHSHFALVLTFERLELRKLDEPKLGAIYVDLAGGAVAHRRKFGGGKGQAIAKAAGLNKGATPTVLDGTAGLGRDAFVLASLGCKVQMVERNPVVAALLDDGLTRAKKDDEIGAWVSERMSLLHASSHDALAALASDAEFVHPDVVYLDPMYPHPENKKKTALVKKEMRVFQSLVGADTDADALLTPALALATKRVVVKRPDYAEWLDGVKPSMAIETKKNRFDVYVNASMS</sequence>
<comment type="function">
    <text evidence="1">Specifically methylates the guanosine in position 1516 of 16S rRNA.</text>
</comment>
<comment type="catalytic activity">
    <reaction evidence="1">
        <text>guanosine(1516) in 16S rRNA + S-adenosyl-L-methionine = N(2)-methylguanosine(1516) in 16S rRNA + S-adenosyl-L-homocysteine + H(+)</text>
        <dbReference type="Rhea" id="RHEA:43220"/>
        <dbReference type="Rhea" id="RHEA-COMP:10412"/>
        <dbReference type="Rhea" id="RHEA-COMP:10413"/>
        <dbReference type="ChEBI" id="CHEBI:15378"/>
        <dbReference type="ChEBI" id="CHEBI:57856"/>
        <dbReference type="ChEBI" id="CHEBI:59789"/>
        <dbReference type="ChEBI" id="CHEBI:74269"/>
        <dbReference type="ChEBI" id="CHEBI:74481"/>
        <dbReference type="EC" id="2.1.1.242"/>
    </reaction>
</comment>
<comment type="subcellular location">
    <subcellularLocation>
        <location evidence="1">Cytoplasm</location>
    </subcellularLocation>
</comment>
<comment type="similarity">
    <text evidence="1">Belongs to the methyltransferase superfamily. RsmJ family.</text>
</comment>
<gene>
    <name evidence="1" type="primary">rsmJ</name>
    <name type="ordered locus">VV0071</name>
</gene>
<proteinExistence type="inferred from homology"/>
<reference key="1">
    <citation type="journal article" date="2003" name="Genome Res.">
        <title>Comparative genome analysis of Vibrio vulnificus, a marine pathogen.</title>
        <authorList>
            <person name="Chen C.-Y."/>
            <person name="Wu K.-M."/>
            <person name="Chang Y.-C."/>
            <person name="Chang C.-H."/>
            <person name="Tsai H.-C."/>
            <person name="Liao T.-L."/>
            <person name="Liu Y.-M."/>
            <person name="Chen H.-J."/>
            <person name="Shen A.B.-T."/>
            <person name="Li J.-C."/>
            <person name="Su T.-L."/>
            <person name="Shao C.-P."/>
            <person name="Lee C.-T."/>
            <person name="Hor L.-I."/>
            <person name="Tsai S.-F."/>
        </authorList>
    </citation>
    <scope>NUCLEOTIDE SEQUENCE [LARGE SCALE GENOMIC DNA]</scope>
    <source>
        <strain>YJ016</strain>
    </source>
</reference>
<protein>
    <recommendedName>
        <fullName evidence="1">Ribosomal RNA small subunit methyltransferase J</fullName>
        <ecNumber evidence="1">2.1.1.242</ecNumber>
    </recommendedName>
    <alternativeName>
        <fullName evidence="1">16S rRNA m2G1516 methyltransferase</fullName>
    </alternativeName>
    <alternativeName>
        <fullName evidence="1">rRNA (guanine-N(2)-)-methyltransferase</fullName>
    </alternativeName>
</protein>